<reference key="1">
    <citation type="journal article" date="2009" name="Proc. Natl. Acad. Sci. U.S.A.">
        <title>Hamiltonella defensa, genome evolution of protective bacterial endosymbiont from pathogenic ancestors.</title>
        <authorList>
            <person name="Degnan P.H."/>
            <person name="Yu Y."/>
            <person name="Sisneros N."/>
            <person name="Wing R.A."/>
            <person name="Moran N.A."/>
        </authorList>
    </citation>
    <scope>NUCLEOTIDE SEQUENCE [LARGE SCALE GENOMIC DNA]</scope>
    <source>
        <strain>5AT</strain>
    </source>
</reference>
<comment type="function">
    <text evidence="1">Single strand-specific metallo-endoribonuclease involved in late-stage 70S ribosome quality control and in maturation of the 3' terminus of the 16S rRNA.</text>
</comment>
<comment type="cofactor">
    <cofactor evidence="1">
        <name>Zn(2+)</name>
        <dbReference type="ChEBI" id="CHEBI:29105"/>
    </cofactor>
    <text evidence="1">Binds 1 zinc ion.</text>
</comment>
<comment type="subcellular location">
    <subcellularLocation>
        <location evidence="1">Cytoplasm</location>
    </subcellularLocation>
</comment>
<comment type="similarity">
    <text evidence="1">Belongs to the endoribonuclease YbeY family.</text>
</comment>
<proteinExistence type="inferred from homology"/>
<accession>C4K8I5</accession>
<keyword id="KW-0963">Cytoplasm</keyword>
<keyword id="KW-0255">Endonuclease</keyword>
<keyword id="KW-0378">Hydrolase</keyword>
<keyword id="KW-0479">Metal-binding</keyword>
<keyword id="KW-0540">Nuclease</keyword>
<keyword id="KW-0690">Ribosome biogenesis</keyword>
<keyword id="KW-0698">rRNA processing</keyword>
<keyword id="KW-0862">Zinc</keyword>
<organism>
    <name type="scientific">Hamiltonella defensa subsp. Acyrthosiphon pisum (strain 5AT)</name>
    <dbReference type="NCBI Taxonomy" id="572265"/>
    <lineage>
        <taxon>Bacteria</taxon>
        <taxon>Pseudomonadati</taxon>
        <taxon>Pseudomonadota</taxon>
        <taxon>Gammaproteobacteria</taxon>
        <taxon>Enterobacterales</taxon>
        <taxon>Enterobacteriaceae</taxon>
        <taxon>aphid secondary symbionts</taxon>
        <taxon>Candidatus Hamiltonella</taxon>
    </lineage>
</organism>
<protein>
    <recommendedName>
        <fullName evidence="1">Endoribonuclease YbeY</fullName>
        <ecNumber evidence="1">3.1.-.-</ecNumber>
    </recommendedName>
</protein>
<feature type="chain" id="PRO_1000201738" description="Endoribonuclease YbeY">
    <location>
        <begin position="1"/>
        <end position="151"/>
    </location>
</feature>
<feature type="binding site" evidence="1">
    <location>
        <position position="114"/>
    </location>
    <ligand>
        <name>Zn(2+)</name>
        <dbReference type="ChEBI" id="CHEBI:29105"/>
        <note>catalytic</note>
    </ligand>
</feature>
<feature type="binding site" evidence="1">
    <location>
        <position position="118"/>
    </location>
    <ligand>
        <name>Zn(2+)</name>
        <dbReference type="ChEBI" id="CHEBI:29105"/>
        <note>catalytic</note>
    </ligand>
</feature>
<feature type="binding site" evidence="1">
    <location>
        <position position="124"/>
    </location>
    <ligand>
        <name>Zn(2+)</name>
        <dbReference type="ChEBI" id="CHEBI:29105"/>
        <note>catalytic</note>
    </ligand>
</feature>
<gene>
    <name evidence="1" type="primary">ybeY</name>
    <name type="ordered locus">HDEF_0047</name>
</gene>
<evidence type="ECO:0000255" key="1">
    <source>
        <dbReference type="HAMAP-Rule" id="MF_00009"/>
    </source>
</evidence>
<sequence>MNQIILDLQIACVDNQGLPNENDFQLWLSSAISPFKKNAEVTIRLVDEIESRQLNFQYRQIDKPTNVLSFPFISPVQVPLPLLGDLIICRQIVEKEAVLQKKALWAHWAHMVVHGALHLLGYDHILNDDAKKMESIETEIMMYLGYPNPYD</sequence>
<name>YBEY_HAMD5</name>
<dbReference type="EC" id="3.1.-.-" evidence="1"/>
<dbReference type="EMBL" id="CP001277">
    <property type="protein sequence ID" value="ACQ66822.1"/>
    <property type="molecule type" value="Genomic_DNA"/>
</dbReference>
<dbReference type="RefSeq" id="WP_012737787.1">
    <property type="nucleotide sequence ID" value="NC_012751.1"/>
</dbReference>
<dbReference type="SMR" id="C4K8I5"/>
<dbReference type="STRING" id="572265.HDEF_0047"/>
<dbReference type="GeneID" id="66259989"/>
<dbReference type="KEGG" id="hde:HDEF_0047"/>
<dbReference type="eggNOG" id="COG0319">
    <property type="taxonomic scope" value="Bacteria"/>
</dbReference>
<dbReference type="HOGENOM" id="CLU_106710_0_1_6"/>
<dbReference type="Proteomes" id="UP000002334">
    <property type="component" value="Chromosome"/>
</dbReference>
<dbReference type="GO" id="GO:0005737">
    <property type="term" value="C:cytoplasm"/>
    <property type="evidence" value="ECO:0007669"/>
    <property type="project" value="UniProtKB-SubCell"/>
</dbReference>
<dbReference type="GO" id="GO:0004222">
    <property type="term" value="F:metalloendopeptidase activity"/>
    <property type="evidence" value="ECO:0007669"/>
    <property type="project" value="InterPro"/>
</dbReference>
<dbReference type="GO" id="GO:0004521">
    <property type="term" value="F:RNA endonuclease activity"/>
    <property type="evidence" value="ECO:0007669"/>
    <property type="project" value="UniProtKB-UniRule"/>
</dbReference>
<dbReference type="GO" id="GO:0008270">
    <property type="term" value="F:zinc ion binding"/>
    <property type="evidence" value="ECO:0007669"/>
    <property type="project" value="UniProtKB-UniRule"/>
</dbReference>
<dbReference type="GO" id="GO:0006364">
    <property type="term" value="P:rRNA processing"/>
    <property type="evidence" value="ECO:0007669"/>
    <property type="project" value="UniProtKB-UniRule"/>
</dbReference>
<dbReference type="Gene3D" id="3.40.390.30">
    <property type="entry name" value="Metalloproteases ('zincins'), catalytic domain"/>
    <property type="match status" value="1"/>
</dbReference>
<dbReference type="HAMAP" id="MF_00009">
    <property type="entry name" value="Endoribonucl_YbeY"/>
    <property type="match status" value="1"/>
</dbReference>
<dbReference type="InterPro" id="IPR023091">
    <property type="entry name" value="MetalPrtase_cat_dom_sf_prd"/>
</dbReference>
<dbReference type="InterPro" id="IPR002036">
    <property type="entry name" value="YbeY"/>
</dbReference>
<dbReference type="InterPro" id="IPR020549">
    <property type="entry name" value="YbeY_CS"/>
</dbReference>
<dbReference type="NCBIfam" id="TIGR00043">
    <property type="entry name" value="rRNA maturation RNase YbeY"/>
    <property type="match status" value="1"/>
</dbReference>
<dbReference type="PANTHER" id="PTHR46986">
    <property type="entry name" value="ENDORIBONUCLEASE YBEY, CHLOROPLASTIC"/>
    <property type="match status" value="1"/>
</dbReference>
<dbReference type="PANTHER" id="PTHR46986:SF1">
    <property type="entry name" value="ENDORIBONUCLEASE YBEY, CHLOROPLASTIC"/>
    <property type="match status" value="1"/>
</dbReference>
<dbReference type="Pfam" id="PF02130">
    <property type="entry name" value="YbeY"/>
    <property type="match status" value="1"/>
</dbReference>
<dbReference type="SUPFAM" id="SSF55486">
    <property type="entry name" value="Metalloproteases ('zincins'), catalytic domain"/>
    <property type="match status" value="1"/>
</dbReference>
<dbReference type="PROSITE" id="PS01306">
    <property type="entry name" value="UPF0054"/>
    <property type="match status" value="1"/>
</dbReference>